<comment type="function">
    <text evidence="1">Catalyzes the attachment of threonine to tRNA(Thr) in a two-step reaction: L-threonine is first activated by ATP to form Thr-AMP and then transferred to the acceptor end of tRNA(Thr). Also edits incorrectly charged L-seryl-tRNA(Thr).</text>
</comment>
<comment type="catalytic activity">
    <reaction evidence="1">
        <text>tRNA(Thr) + L-threonine + ATP = L-threonyl-tRNA(Thr) + AMP + diphosphate + H(+)</text>
        <dbReference type="Rhea" id="RHEA:24624"/>
        <dbReference type="Rhea" id="RHEA-COMP:9670"/>
        <dbReference type="Rhea" id="RHEA-COMP:9704"/>
        <dbReference type="ChEBI" id="CHEBI:15378"/>
        <dbReference type="ChEBI" id="CHEBI:30616"/>
        <dbReference type="ChEBI" id="CHEBI:33019"/>
        <dbReference type="ChEBI" id="CHEBI:57926"/>
        <dbReference type="ChEBI" id="CHEBI:78442"/>
        <dbReference type="ChEBI" id="CHEBI:78534"/>
        <dbReference type="ChEBI" id="CHEBI:456215"/>
        <dbReference type="EC" id="6.1.1.3"/>
    </reaction>
</comment>
<comment type="cofactor">
    <cofactor evidence="1">
        <name>Zn(2+)</name>
        <dbReference type="ChEBI" id="CHEBI:29105"/>
    </cofactor>
    <text evidence="1">Binds 1 zinc ion per subunit.</text>
</comment>
<comment type="subunit">
    <text evidence="1">Homodimer.</text>
</comment>
<comment type="subcellular location">
    <subcellularLocation>
        <location evidence="1">Cytoplasm</location>
    </subcellularLocation>
</comment>
<comment type="similarity">
    <text evidence="1">Belongs to the class-II aminoacyl-tRNA synthetase family.</text>
</comment>
<evidence type="ECO:0000255" key="1">
    <source>
        <dbReference type="HAMAP-Rule" id="MF_00184"/>
    </source>
</evidence>
<evidence type="ECO:0000255" key="2">
    <source>
        <dbReference type="PROSITE-ProRule" id="PRU01228"/>
    </source>
</evidence>
<proteinExistence type="inferred from homology"/>
<dbReference type="EC" id="6.1.1.3" evidence="1"/>
<dbReference type="EMBL" id="CP001010">
    <property type="protein sequence ID" value="ACB44191.1"/>
    <property type="molecule type" value="Genomic_DNA"/>
</dbReference>
<dbReference type="SMR" id="B1XV14"/>
<dbReference type="STRING" id="452638.Pnec_1010"/>
<dbReference type="KEGG" id="pne:Pnec_1010"/>
<dbReference type="eggNOG" id="COG0441">
    <property type="taxonomic scope" value="Bacteria"/>
</dbReference>
<dbReference type="HOGENOM" id="CLU_008554_0_1_4"/>
<dbReference type="OrthoDB" id="9802304at2"/>
<dbReference type="GO" id="GO:0005829">
    <property type="term" value="C:cytosol"/>
    <property type="evidence" value="ECO:0007669"/>
    <property type="project" value="TreeGrafter"/>
</dbReference>
<dbReference type="GO" id="GO:0005524">
    <property type="term" value="F:ATP binding"/>
    <property type="evidence" value="ECO:0007669"/>
    <property type="project" value="UniProtKB-UniRule"/>
</dbReference>
<dbReference type="GO" id="GO:0046872">
    <property type="term" value="F:metal ion binding"/>
    <property type="evidence" value="ECO:0007669"/>
    <property type="project" value="UniProtKB-KW"/>
</dbReference>
<dbReference type="GO" id="GO:0004829">
    <property type="term" value="F:threonine-tRNA ligase activity"/>
    <property type="evidence" value="ECO:0007669"/>
    <property type="project" value="UniProtKB-UniRule"/>
</dbReference>
<dbReference type="GO" id="GO:0000049">
    <property type="term" value="F:tRNA binding"/>
    <property type="evidence" value="ECO:0007669"/>
    <property type="project" value="UniProtKB-KW"/>
</dbReference>
<dbReference type="GO" id="GO:0006435">
    <property type="term" value="P:threonyl-tRNA aminoacylation"/>
    <property type="evidence" value="ECO:0007669"/>
    <property type="project" value="UniProtKB-UniRule"/>
</dbReference>
<dbReference type="CDD" id="cd01667">
    <property type="entry name" value="TGS_ThrRS"/>
    <property type="match status" value="1"/>
</dbReference>
<dbReference type="CDD" id="cd00860">
    <property type="entry name" value="ThrRS_anticodon"/>
    <property type="match status" value="1"/>
</dbReference>
<dbReference type="CDD" id="cd00771">
    <property type="entry name" value="ThrRS_core"/>
    <property type="match status" value="1"/>
</dbReference>
<dbReference type="FunFam" id="3.10.20.30:FF:000005">
    <property type="entry name" value="Threonine--tRNA ligase"/>
    <property type="match status" value="1"/>
</dbReference>
<dbReference type="FunFam" id="3.30.54.20:FF:000002">
    <property type="entry name" value="Threonine--tRNA ligase"/>
    <property type="match status" value="1"/>
</dbReference>
<dbReference type="FunFam" id="3.30.930.10:FF:000002">
    <property type="entry name" value="Threonine--tRNA ligase"/>
    <property type="match status" value="1"/>
</dbReference>
<dbReference type="FunFam" id="3.40.50.800:FF:000001">
    <property type="entry name" value="Threonine--tRNA ligase"/>
    <property type="match status" value="1"/>
</dbReference>
<dbReference type="FunFam" id="3.30.980.10:FF:000005">
    <property type="entry name" value="Threonyl-tRNA synthetase, mitochondrial"/>
    <property type="match status" value="1"/>
</dbReference>
<dbReference type="Gene3D" id="3.10.20.30">
    <property type="match status" value="1"/>
</dbReference>
<dbReference type="Gene3D" id="3.30.54.20">
    <property type="match status" value="1"/>
</dbReference>
<dbReference type="Gene3D" id="3.40.50.800">
    <property type="entry name" value="Anticodon-binding domain"/>
    <property type="match status" value="1"/>
</dbReference>
<dbReference type="Gene3D" id="3.30.930.10">
    <property type="entry name" value="Bira Bifunctional Protein, Domain 2"/>
    <property type="match status" value="1"/>
</dbReference>
<dbReference type="Gene3D" id="3.30.980.10">
    <property type="entry name" value="Threonyl-trna Synthetase, Chain A, domain 2"/>
    <property type="match status" value="1"/>
</dbReference>
<dbReference type="HAMAP" id="MF_00184">
    <property type="entry name" value="Thr_tRNA_synth"/>
    <property type="match status" value="1"/>
</dbReference>
<dbReference type="InterPro" id="IPR002314">
    <property type="entry name" value="aa-tRNA-synt_IIb"/>
</dbReference>
<dbReference type="InterPro" id="IPR006195">
    <property type="entry name" value="aa-tRNA-synth_II"/>
</dbReference>
<dbReference type="InterPro" id="IPR045864">
    <property type="entry name" value="aa-tRNA-synth_II/BPL/LPL"/>
</dbReference>
<dbReference type="InterPro" id="IPR004154">
    <property type="entry name" value="Anticodon-bd"/>
</dbReference>
<dbReference type="InterPro" id="IPR036621">
    <property type="entry name" value="Anticodon-bd_dom_sf"/>
</dbReference>
<dbReference type="InterPro" id="IPR012675">
    <property type="entry name" value="Beta-grasp_dom_sf"/>
</dbReference>
<dbReference type="InterPro" id="IPR004095">
    <property type="entry name" value="TGS"/>
</dbReference>
<dbReference type="InterPro" id="IPR012676">
    <property type="entry name" value="TGS-like"/>
</dbReference>
<dbReference type="InterPro" id="IPR002320">
    <property type="entry name" value="Thr-tRNA-ligase_IIa"/>
</dbReference>
<dbReference type="InterPro" id="IPR018163">
    <property type="entry name" value="Thr/Ala-tRNA-synth_IIc_edit"/>
</dbReference>
<dbReference type="InterPro" id="IPR047246">
    <property type="entry name" value="ThrRS_anticodon"/>
</dbReference>
<dbReference type="InterPro" id="IPR033728">
    <property type="entry name" value="ThrRS_core"/>
</dbReference>
<dbReference type="InterPro" id="IPR012947">
    <property type="entry name" value="tRNA_SAD"/>
</dbReference>
<dbReference type="NCBIfam" id="TIGR00418">
    <property type="entry name" value="thrS"/>
    <property type="match status" value="1"/>
</dbReference>
<dbReference type="PANTHER" id="PTHR11451:SF44">
    <property type="entry name" value="THREONINE--TRNA LIGASE, CHLOROPLASTIC_MITOCHONDRIAL 2"/>
    <property type="match status" value="1"/>
</dbReference>
<dbReference type="PANTHER" id="PTHR11451">
    <property type="entry name" value="THREONINE-TRNA LIGASE"/>
    <property type="match status" value="1"/>
</dbReference>
<dbReference type="Pfam" id="PF03129">
    <property type="entry name" value="HGTP_anticodon"/>
    <property type="match status" value="1"/>
</dbReference>
<dbReference type="Pfam" id="PF02824">
    <property type="entry name" value="TGS"/>
    <property type="match status" value="1"/>
</dbReference>
<dbReference type="Pfam" id="PF00587">
    <property type="entry name" value="tRNA-synt_2b"/>
    <property type="match status" value="1"/>
</dbReference>
<dbReference type="Pfam" id="PF07973">
    <property type="entry name" value="tRNA_SAD"/>
    <property type="match status" value="1"/>
</dbReference>
<dbReference type="PRINTS" id="PR01047">
    <property type="entry name" value="TRNASYNTHTHR"/>
</dbReference>
<dbReference type="SMART" id="SM00863">
    <property type="entry name" value="tRNA_SAD"/>
    <property type="match status" value="1"/>
</dbReference>
<dbReference type="SUPFAM" id="SSF52954">
    <property type="entry name" value="Class II aaRS ABD-related"/>
    <property type="match status" value="1"/>
</dbReference>
<dbReference type="SUPFAM" id="SSF55681">
    <property type="entry name" value="Class II aaRS and biotin synthetases"/>
    <property type="match status" value="1"/>
</dbReference>
<dbReference type="SUPFAM" id="SSF81271">
    <property type="entry name" value="TGS-like"/>
    <property type="match status" value="1"/>
</dbReference>
<dbReference type="SUPFAM" id="SSF55186">
    <property type="entry name" value="ThrRS/AlaRS common domain"/>
    <property type="match status" value="1"/>
</dbReference>
<dbReference type="PROSITE" id="PS50862">
    <property type="entry name" value="AA_TRNA_LIGASE_II"/>
    <property type="match status" value="1"/>
</dbReference>
<dbReference type="PROSITE" id="PS51880">
    <property type="entry name" value="TGS"/>
    <property type="match status" value="1"/>
</dbReference>
<feature type="chain" id="PRO_1000098594" description="Threonine--tRNA ligase">
    <location>
        <begin position="1"/>
        <end position="640"/>
    </location>
</feature>
<feature type="domain" description="TGS" evidence="2">
    <location>
        <begin position="1"/>
        <end position="61"/>
    </location>
</feature>
<feature type="region of interest" description="Catalytic" evidence="1">
    <location>
        <begin position="242"/>
        <end position="533"/>
    </location>
</feature>
<feature type="binding site" evidence="1">
    <location>
        <position position="333"/>
    </location>
    <ligand>
        <name>Zn(2+)</name>
        <dbReference type="ChEBI" id="CHEBI:29105"/>
    </ligand>
</feature>
<feature type="binding site" evidence="1">
    <location>
        <position position="384"/>
    </location>
    <ligand>
        <name>Zn(2+)</name>
        <dbReference type="ChEBI" id="CHEBI:29105"/>
    </ligand>
</feature>
<feature type="binding site" evidence="1">
    <location>
        <position position="510"/>
    </location>
    <ligand>
        <name>Zn(2+)</name>
        <dbReference type="ChEBI" id="CHEBI:29105"/>
    </ligand>
</feature>
<sequence>MLVVTLPDGSKREFEAPVRVADVAQSIGSGLAKAALGGIVDGKMVDTSFVIDKDSQLAIITDKSPEALEIVRHSTAHLLAYAVKELFPEAQVTIGPVIENGFYYDFSYHRPFTPDDLVALEKKMTELAKRDEPVTRTVMPRDEAVEFFKKQGENYKAELIASIPQGEDVSLYAEGKFTDLCRGPHVPSTGKLKVFKLMKLAGAYWRGDSKNEMLQRIYGTTWLRKEDQDAYLHMLEESEKRDHRRLGKQLDLFHFQEEAPGLIFWHPKGWSIWQEVEQYMRRVYQQEGYQEVKAPQILDRGLWEKSGHWENYKENMFTTESENRAYALKPMNCPGHVQIYNSGLHSYRELPLRFGEFGQCHRNEPSGALHGLMRVRGFTQDDGHIFCTEDQIQSEVAAFDKAVRAVYQDFGFTEVAVKLALRPAKRVGDDAIWDKAEEALRGALKASGQEWEELPGEGAFYGPKIEYHLKDSIGRTWQCGTIQVDFSMPARLGAEYVAENNSRKTPVMLHRAIVGSLERFIGILIENHTGNMPVWLAPTQAVVLNISGNSAAYAQQVQQLLKKQGFRIESDLRNEKITYKIREYALQKTPFLLIVGDKESESNTVAVRARGGVDLGVMPLDAFVARLQQDISQKVGPEPS</sequence>
<name>SYT_POLNS</name>
<protein>
    <recommendedName>
        <fullName evidence="1">Threonine--tRNA ligase</fullName>
        <ecNumber evidence="1">6.1.1.3</ecNumber>
    </recommendedName>
    <alternativeName>
        <fullName evidence="1">Threonyl-tRNA synthetase</fullName>
        <shortName evidence="1">ThrRS</shortName>
    </alternativeName>
</protein>
<accession>B1XV14</accession>
<keyword id="KW-0030">Aminoacyl-tRNA synthetase</keyword>
<keyword id="KW-0067">ATP-binding</keyword>
<keyword id="KW-0963">Cytoplasm</keyword>
<keyword id="KW-0436">Ligase</keyword>
<keyword id="KW-0479">Metal-binding</keyword>
<keyword id="KW-0547">Nucleotide-binding</keyword>
<keyword id="KW-0648">Protein biosynthesis</keyword>
<keyword id="KW-0694">RNA-binding</keyword>
<keyword id="KW-0820">tRNA-binding</keyword>
<keyword id="KW-0862">Zinc</keyword>
<gene>
    <name evidence="1" type="primary">thrS</name>
    <name type="ordered locus">Pnec_1010</name>
</gene>
<organism>
    <name type="scientific">Polynucleobacter necessarius subsp. necessarius (strain STIR1)</name>
    <dbReference type="NCBI Taxonomy" id="452638"/>
    <lineage>
        <taxon>Bacteria</taxon>
        <taxon>Pseudomonadati</taxon>
        <taxon>Pseudomonadota</taxon>
        <taxon>Betaproteobacteria</taxon>
        <taxon>Burkholderiales</taxon>
        <taxon>Burkholderiaceae</taxon>
        <taxon>Polynucleobacter</taxon>
    </lineage>
</organism>
<reference key="1">
    <citation type="journal article" date="2013" name="Proc. Natl. Acad. Sci. U.S.A.">
        <title>Polynucleobacter necessarius, a model for genome reduction in both free-living and symbiotic bacteria.</title>
        <authorList>
            <person name="Boscaro V."/>
            <person name="Felletti M."/>
            <person name="Vannini C."/>
            <person name="Ackerman M.S."/>
            <person name="Chain P.S."/>
            <person name="Malfatti S."/>
            <person name="Vergez L.M."/>
            <person name="Shin M."/>
            <person name="Doak T.G."/>
            <person name="Lynch M."/>
            <person name="Petroni G."/>
        </authorList>
    </citation>
    <scope>NUCLEOTIDE SEQUENCE [LARGE SCALE GENOMIC DNA]</scope>
    <source>
        <strain>STIR1</strain>
    </source>
</reference>